<protein>
    <recommendedName>
        <fullName evidence="1">Protein RecA</fullName>
    </recommendedName>
    <alternativeName>
        <fullName evidence="1">Recombinase A</fullName>
    </alternativeName>
</protein>
<dbReference type="EMBL" id="AE004092">
    <property type="protein sequence ID" value="AAK34761.1"/>
    <property type="molecule type" value="Genomic_DNA"/>
</dbReference>
<dbReference type="EMBL" id="CP000017">
    <property type="protein sequence ID" value="AAZ52417.1"/>
    <property type="molecule type" value="Genomic_DNA"/>
</dbReference>
<dbReference type="RefSeq" id="NP_270040.1">
    <property type="nucleotide sequence ID" value="NC_002737.2"/>
</dbReference>
<dbReference type="SMR" id="P0C095"/>
<dbReference type="PaxDb" id="1314-HKU360_01913"/>
<dbReference type="KEGG" id="spy:SPy_2116"/>
<dbReference type="KEGG" id="spz:M5005_Spy1799"/>
<dbReference type="PATRIC" id="fig|160490.10.peg.1833"/>
<dbReference type="HOGENOM" id="CLU_040469_3_2_9"/>
<dbReference type="OMA" id="DSKMGLH"/>
<dbReference type="Proteomes" id="UP000000750">
    <property type="component" value="Chromosome"/>
</dbReference>
<dbReference type="GO" id="GO:0005829">
    <property type="term" value="C:cytosol"/>
    <property type="evidence" value="ECO:0007669"/>
    <property type="project" value="TreeGrafter"/>
</dbReference>
<dbReference type="GO" id="GO:0005524">
    <property type="term" value="F:ATP binding"/>
    <property type="evidence" value="ECO:0007669"/>
    <property type="project" value="UniProtKB-UniRule"/>
</dbReference>
<dbReference type="GO" id="GO:0016887">
    <property type="term" value="F:ATP hydrolysis activity"/>
    <property type="evidence" value="ECO:0007669"/>
    <property type="project" value="InterPro"/>
</dbReference>
<dbReference type="GO" id="GO:0140664">
    <property type="term" value="F:ATP-dependent DNA damage sensor activity"/>
    <property type="evidence" value="ECO:0007669"/>
    <property type="project" value="InterPro"/>
</dbReference>
<dbReference type="GO" id="GO:0003684">
    <property type="term" value="F:damaged DNA binding"/>
    <property type="evidence" value="ECO:0007669"/>
    <property type="project" value="UniProtKB-UniRule"/>
</dbReference>
<dbReference type="GO" id="GO:0003697">
    <property type="term" value="F:single-stranded DNA binding"/>
    <property type="evidence" value="ECO:0007669"/>
    <property type="project" value="UniProtKB-UniRule"/>
</dbReference>
<dbReference type="GO" id="GO:0006310">
    <property type="term" value="P:DNA recombination"/>
    <property type="evidence" value="ECO:0007669"/>
    <property type="project" value="UniProtKB-UniRule"/>
</dbReference>
<dbReference type="GO" id="GO:0006281">
    <property type="term" value="P:DNA repair"/>
    <property type="evidence" value="ECO:0007669"/>
    <property type="project" value="UniProtKB-UniRule"/>
</dbReference>
<dbReference type="GO" id="GO:0009432">
    <property type="term" value="P:SOS response"/>
    <property type="evidence" value="ECO:0007669"/>
    <property type="project" value="UniProtKB-UniRule"/>
</dbReference>
<dbReference type="CDD" id="cd00983">
    <property type="entry name" value="RecA"/>
    <property type="match status" value="1"/>
</dbReference>
<dbReference type="FunFam" id="3.40.50.300:FF:000087">
    <property type="entry name" value="Recombinase RecA"/>
    <property type="match status" value="1"/>
</dbReference>
<dbReference type="Gene3D" id="3.40.50.300">
    <property type="entry name" value="P-loop containing nucleotide triphosphate hydrolases"/>
    <property type="match status" value="1"/>
</dbReference>
<dbReference type="HAMAP" id="MF_00268">
    <property type="entry name" value="RecA"/>
    <property type="match status" value="1"/>
</dbReference>
<dbReference type="InterPro" id="IPR003593">
    <property type="entry name" value="AAA+_ATPase"/>
</dbReference>
<dbReference type="InterPro" id="IPR013765">
    <property type="entry name" value="DNA_recomb/repair_RecA"/>
</dbReference>
<dbReference type="InterPro" id="IPR020584">
    <property type="entry name" value="DNA_recomb/repair_RecA_CS"/>
</dbReference>
<dbReference type="InterPro" id="IPR027417">
    <property type="entry name" value="P-loop_NTPase"/>
</dbReference>
<dbReference type="InterPro" id="IPR049261">
    <property type="entry name" value="RecA-like_C"/>
</dbReference>
<dbReference type="InterPro" id="IPR049428">
    <property type="entry name" value="RecA-like_N"/>
</dbReference>
<dbReference type="InterPro" id="IPR020588">
    <property type="entry name" value="RecA_ATP-bd"/>
</dbReference>
<dbReference type="InterPro" id="IPR023400">
    <property type="entry name" value="RecA_C_sf"/>
</dbReference>
<dbReference type="InterPro" id="IPR020587">
    <property type="entry name" value="RecA_monomer-monomer_interface"/>
</dbReference>
<dbReference type="NCBIfam" id="TIGR02012">
    <property type="entry name" value="tigrfam_recA"/>
    <property type="match status" value="1"/>
</dbReference>
<dbReference type="PANTHER" id="PTHR45900:SF1">
    <property type="entry name" value="MITOCHONDRIAL DNA REPAIR PROTEIN RECA HOMOLOG-RELATED"/>
    <property type="match status" value="1"/>
</dbReference>
<dbReference type="PANTHER" id="PTHR45900">
    <property type="entry name" value="RECA"/>
    <property type="match status" value="1"/>
</dbReference>
<dbReference type="Pfam" id="PF00154">
    <property type="entry name" value="RecA"/>
    <property type="match status" value="1"/>
</dbReference>
<dbReference type="Pfam" id="PF21096">
    <property type="entry name" value="RecA_C"/>
    <property type="match status" value="1"/>
</dbReference>
<dbReference type="PRINTS" id="PR00142">
    <property type="entry name" value="RECA"/>
</dbReference>
<dbReference type="SMART" id="SM00382">
    <property type="entry name" value="AAA"/>
    <property type="match status" value="1"/>
</dbReference>
<dbReference type="SUPFAM" id="SSF52540">
    <property type="entry name" value="P-loop containing nucleoside triphosphate hydrolases"/>
    <property type="match status" value="1"/>
</dbReference>
<dbReference type="SUPFAM" id="SSF54752">
    <property type="entry name" value="RecA protein, C-terminal domain"/>
    <property type="match status" value="1"/>
</dbReference>
<dbReference type="PROSITE" id="PS00321">
    <property type="entry name" value="RECA_1"/>
    <property type="match status" value="1"/>
</dbReference>
<dbReference type="PROSITE" id="PS50162">
    <property type="entry name" value="RECA_2"/>
    <property type="match status" value="1"/>
</dbReference>
<dbReference type="PROSITE" id="PS50163">
    <property type="entry name" value="RECA_3"/>
    <property type="match status" value="1"/>
</dbReference>
<accession>P0C095</accession>
<accession>Q48W58</accession>
<accession>Q59942</accession>
<sequence length="378" mass="40589">MAKKLKKNEEITKKFGDERRKALDDALKNIEKDFGKGAVMRLGERAEQKVQVMSSGSLALDIALGAGGYPKGRIIEIYGPESSGKTTVALHAVAQAQKEGGIAAFIDAEHALDPAYAAALGVNIDELLLSQPDSGEQGLEIAGKLIDSGAVDLVVVDSVAALVPRAEIDGDIGDSHVGLQARMMSQAMRKLSASINKTKTIAIFINQLREKVGVMFGNPETTPGGRALKFYASVRLDVRGTTQIKGTGDQKDSSIGKETKIKVVKNKVAPPFKVAEVEIMYGEGISRTGELVKIASDLDIIQKAGAWFSYNGEKIGQGSENAKRYLADHPELFDEIDLKVRVKFGLLEESEEESAMAVASEETDDLALDLDNGIEIED</sequence>
<reference key="1">
    <citation type="journal article" date="2001" name="Proc. Natl. Acad. Sci. U.S.A.">
        <title>Complete genome sequence of an M1 strain of Streptococcus pyogenes.</title>
        <authorList>
            <person name="Ferretti J.J."/>
            <person name="McShan W.M."/>
            <person name="Ajdic D.J."/>
            <person name="Savic D.J."/>
            <person name="Savic G."/>
            <person name="Lyon K."/>
            <person name="Primeaux C."/>
            <person name="Sezate S."/>
            <person name="Suvorov A.N."/>
            <person name="Kenton S."/>
            <person name="Lai H.S."/>
            <person name="Lin S.P."/>
            <person name="Qian Y."/>
            <person name="Jia H.G."/>
            <person name="Najar F.Z."/>
            <person name="Ren Q."/>
            <person name="Zhu H."/>
            <person name="Song L."/>
            <person name="White J."/>
            <person name="Yuan X."/>
            <person name="Clifton S.W."/>
            <person name="Roe B.A."/>
            <person name="McLaughlin R.E."/>
        </authorList>
    </citation>
    <scope>NUCLEOTIDE SEQUENCE [LARGE SCALE GENOMIC DNA]</scope>
    <source>
        <strain>ATCC 700294 / SF370 / Serotype M1</strain>
    </source>
</reference>
<reference key="2">
    <citation type="journal article" date="2005" name="J. Infect. Dis.">
        <title>Evolutionary origin and emergence of a highly successful clone of serotype M1 group A Streptococcus involved multiple horizontal gene transfer events.</title>
        <authorList>
            <person name="Sumby P."/>
            <person name="Porcella S.F."/>
            <person name="Madrigal A.G."/>
            <person name="Barbian K.D."/>
            <person name="Virtaneva K."/>
            <person name="Ricklefs S.M."/>
            <person name="Sturdevant D.E."/>
            <person name="Graham M.R."/>
            <person name="Vuopio-Varkila J."/>
            <person name="Hoe N.P."/>
            <person name="Musser J.M."/>
        </authorList>
    </citation>
    <scope>NUCLEOTIDE SEQUENCE [LARGE SCALE GENOMIC DNA]</scope>
    <source>
        <strain>ATCC BAA-947 / MGAS5005 / Serotype M1</strain>
    </source>
</reference>
<gene>
    <name evidence="1" type="primary">recA</name>
    <name type="ordered locus">SPy_2116</name>
    <name type="ordered locus">M5005_Spy1799</name>
</gene>
<comment type="function">
    <text evidence="1">Can catalyze the hydrolysis of ATP in the presence of single-stranded DNA, the ATP-dependent uptake of single-stranded DNA by duplex DNA, and the ATP-dependent hybridization of homologous single-stranded DNAs. It interacts with LexA causing its activation and leading to its autocatalytic cleavage.</text>
</comment>
<comment type="subcellular location">
    <subcellularLocation>
        <location evidence="1">Cytoplasm</location>
    </subcellularLocation>
</comment>
<comment type="similarity">
    <text evidence="1">Belongs to the RecA family.</text>
</comment>
<organism>
    <name type="scientific">Streptococcus pyogenes serotype M1</name>
    <dbReference type="NCBI Taxonomy" id="301447"/>
    <lineage>
        <taxon>Bacteria</taxon>
        <taxon>Bacillati</taxon>
        <taxon>Bacillota</taxon>
        <taxon>Bacilli</taxon>
        <taxon>Lactobacillales</taxon>
        <taxon>Streptococcaceae</taxon>
        <taxon>Streptococcus</taxon>
    </lineage>
</organism>
<evidence type="ECO:0000255" key="1">
    <source>
        <dbReference type="HAMAP-Rule" id="MF_00268"/>
    </source>
</evidence>
<name>RECA_STRP1</name>
<proteinExistence type="inferred from homology"/>
<keyword id="KW-0067">ATP-binding</keyword>
<keyword id="KW-0963">Cytoplasm</keyword>
<keyword id="KW-0227">DNA damage</keyword>
<keyword id="KW-0233">DNA recombination</keyword>
<keyword id="KW-0234">DNA repair</keyword>
<keyword id="KW-0238">DNA-binding</keyword>
<keyword id="KW-0547">Nucleotide-binding</keyword>
<keyword id="KW-1185">Reference proteome</keyword>
<keyword id="KW-0742">SOS response</keyword>
<feature type="chain" id="PRO_0000122861" description="Protein RecA">
    <location>
        <begin position="1"/>
        <end position="378"/>
    </location>
</feature>
<feature type="binding site" evidence="1">
    <location>
        <begin position="79"/>
        <end position="86"/>
    </location>
    <ligand>
        <name>ATP</name>
        <dbReference type="ChEBI" id="CHEBI:30616"/>
    </ligand>
</feature>